<feature type="chain" id="PRO_0000197412" description="Metallothionein-like protein 1">
    <location>
        <begin position="1"/>
        <end position="72"/>
    </location>
</feature>
<feature type="sequence conflict" description="In Ref. 1; CAA36249." evidence="1" ref="1">
    <original>C</original>
    <variation>S</variation>
    <location>
        <position position="11"/>
    </location>
</feature>
<protein>
    <recommendedName>
        <fullName>Metallothionein-like protein 1</fullName>
        <shortName>MT-1</shortName>
    </recommendedName>
</protein>
<sequence length="72" mass="7348">MSSGCSCGSGCKCGDNCSCSMYPDMETNTTVTMIEGVAPLKMYSEGSEKSFGAEGGNGCKCGSNCKCDPCNC</sequence>
<organism>
    <name type="scientific">Erythranthe guttata</name>
    <name type="common">Yellow monkey flower</name>
    <name type="synonym">Mimulus guttatus</name>
    <dbReference type="NCBI Taxonomy" id="4155"/>
    <lineage>
        <taxon>Eukaryota</taxon>
        <taxon>Viridiplantae</taxon>
        <taxon>Streptophyta</taxon>
        <taxon>Embryophyta</taxon>
        <taxon>Tracheophyta</taxon>
        <taxon>Spermatophyta</taxon>
        <taxon>Magnoliopsida</taxon>
        <taxon>eudicotyledons</taxon>
        <taxon>Gunneridae</taxon>
        <taxon>Pentapetalae</taxon>
        <taxon>asterids</taxon>
        <taxon>lamiids</taxon>
        <taxon>Lamiales</taxon>
        <taxon>Phrymaceae</taxon>
        <taxon>Erythranthe</taxon>
    </lineage>
</organism>
<dbReference type="EMBL" id="X51993">
    <property type="protein sequence ID" value="CAA36249.1"/>
    <property type="molecule type" value="mRNA"/>
</dbReference>
<dbReference type="PIR" id="A34131">
    <property type="entry name" value="A34131"/>
</dbReference>
<dbReference type="RefSeq" id="NP_001412438.1">
    <property type="nucleotide sequence ID" value="NM_001425509.1"/>
</dbReference>
<dbReference type="RefSeq" id="XP_012827917.1">
    <property type="nucleotide sequence ID" value="XM_012972463.1"/>
</dbReference>
<dbReference type="GeneID" id="105949175"/>
<dbReference type="KEGG" id="egt:105949175"/>
<dbReference type="eggNOG" id="KOG4738">
    <property type="taxonomic scope" value="Eukaryota"/>
</dbReference>
<dbReference type="OMA" id="KMFYERS"/>
<dbReference type="OrthoDB" id="1111048at2759"/>
<dbReference type="PhylomeDB" id="P20238"/>
<dbReference type="GO" id="GO:0046872">
    <property type="term" value="F:metal ion binding"/>
    <property type="evidence" value="ECO:0007669"/>
    <property type="project" value="UniProtKB-KW"/>
</dbReference>
<dbReference type="InterPro" id="IPR000347">
    <property type="entry name" value="Metalthion_15p"/>
</dbReference>
<dbReference type="PANTHER" id="PTHR33543">
    <property type="entry name" value="METALLOTHIONEIN-LIKE PROTEIN 2A"/>
    <property type="match status" value="1"/>
</dbReference>
<dbReference type="PANTHER" id="PTHR33543:SF37">
    <property type="entry name" value="METALLOTHIONEIN-LIKE PROTEIN 4B"/>
    <property type="match status" value="1"/>
</dbReference>
<dbReference type="Pfam" id="PF01439">
    <property type="entry name" value="Metallothio_2"/>
    <property type="match status" value="1"/>
</dbReference>
<evidence type="ECO:0000305" key="1"/>
<comment type="function">
    <text>Metallothioneins have a high content of cysteine residues that bind various heavy metals.</text>
</comment>
<comment type="similarity">
    <text evidence="1">Belongs to the metallothionein superfamily. Type 15 family.</text>
</comment>
<name>MT1_ERYGU</name>
<proteinExistence type="inferred from homology"/>
<accession>P20238</accession>
<keyword id="KW-0479">Metal-binding</keyword>
<keyword id="KW-0480">Metal-thiolate cluster</keyword>
<reference key="1">
    <citation type="journal article" date="1990" name="FEBS Lett.">
        <title>Metallothionein genes from the flowering plant Mimulus guttatus.</title>
        <authorList>
            <person name="de Miranda J.R."/>
            <person name="Thomas M.A."/>
            <person name="Thurman D.A."/>
            <person name="Tomsett A.B."/>
        </authorList>
    </citation>
    <scope>NUCLEOTIDE SEQUENCE [MRNA]</scope>
</reference>